<reference key="1">
    <citation type="journal article" date="2004" name="Nucleic Acids Res.">
        <title>The genome sequence of Bacillus cereus ATCC 10987 reveals metabolic adaptations and a large plasmid related to Bacillus anthracis pXO1.</title>
        <authorList>
            <person name="Rasko D.A."/>
            <person name="Ravel J."/>
            <person name="Oekstad O.A."/>
            <person name="Helgason E."/>
            <person name="Cer R.Z."/>
            <person name="Jiang L."/>
            <person name="Shores K.A."/>
            <person name="Fouts D.E."/>
            <person name="Tourasse N.J."/>
            <person name="Angiuoli S.V."/>
            <person name="Kolonay J.F."/>
            <person name="Nelson W.C."/>
            <person name="Kolstoe A.-B."/>
            <person name="Fraser C.M."/>
            <person name="Read T.D."/>
        </authorList>
    </citation>
    <scope>NUCLEOTIDE SEQUENCE [LARGE SCALE GENOMIC DNA]</scope>
    <source>
        <strain>ATCC 10987 / NRS 248</strain>
    </source>
</reference>
<gene>
    <name evidence="1" type="primary">proA</name>
    <name type="ordered locus">BCE_3028</name>
</gene>
<protein>
    <recommendedName>
        <fullName evidence="1">Gamma-glutamyl phosphate reductase</fullName>
        <shortName evidence="1">GPR</shortName>
        <ecNumber evidence="1">1.2.1.41</ecNumber>
    </recommendedName>
    <alternativeName>
        <fullName evidence="1">Glutamate-5-semialdehyde dehydrogenase</fullName>
    </alternativeName>
    <alternativeName>
        <fullName evidence="1">Glutamyl-gamma-semialdehyde dehydrogenase</fullName>
        <shortName evidence="1">GSA dehydrogenase</shortName>
    </alternativeName>
</protein>
<evidence type="ECO:0000255" key="1">
    <source>
        <dbReference type="HAMAP-Rule" id="MF_00412"/>
    </source>
</evidence>
<feature type="chain" id="PRO_0000189687" description="Gamma-glutamyl phosphate reductase">
    <location>
        <begin position="1"/>
        <end position="415"/>
    </location>
</feature>
<proteinExistence type="inferred from homology"/>
<keyword id="KW-0028">Amino-acid biosynthesis</keyword>
<keyword id="KW-0963">Cytoplasm</keyword>
<keyword id="KW-0521">NADP</keyword>
<keyword id="KW-0560">Oxidoreductase</keyword>
<keyword id="KW-0641">Proline biosynthesis</keyword>
<organism>
    <name type="scientific">Bacillus cereus (strain ATCC 10987 / NRS 248)</name>
    <dbReference type="NCBI Taxonomy" id="222523"/>
    <lineage>
        <taxon>Bacteria</taxon>
        <taxon>Bacillati</taxon>
        <taxon>Bacillota</taxon>
        <taxon>Bacilli</taxon>
        <taxon>Bacillales</taxon>
        <taxon>Bacillaceae</taxon>
        <taxon>Bacillus</taxon>
        <taxon>Bacillus cereus group</taxon>
    </lineage>
</organism>
<dbReference type="EC" id="1.2.1.41" evidence="1"/>
<dbReference type="EMBL" id="AE017194">
    <property type="protein sequence ID" value="AAS41939.1"/>
    <property type="molecule type" value="Genomic_DNA"/>
</dbReference>
<dbReference type="SMR" id="Q735X3"/>
<dbReference type="KEGG" id="bca:BCE_3028"/>
<dbReference type="HOGENOM" id="CLU_030231_0_0_9"/>
<dbReference type="UniPathway" id="UPA00098">
    <property type="reaction ID" value="UER00360"/>
</dbReference>
<dbReference type="Proteomes" id="UP000002527">
    <property type="component" value="Chromosome"/>
</dbReference>
<dbReference type="GO" id="GO:0005737">
    <property type="term" value="C:cytoplasm"/>
    <property type="evidence" value="ECO:0007669"/>
    <property type="project" value="UniProtKB-SubCell"/>
</dbReference>
<dbReference type="GO" id="GO:0004350">
    <property type="term" value="F:glutamate-5-semialdehyde dehydrogenase activity"/>
    <property type="evidence" value="ECO:0007669"/>
    <property type="project" value="UniProtKB-UniRule"/>
</dbReference>
<dbReference type="GO" id="GO:0050661">
    <property type="term" value="F:NADP binding"/>
    <property type="evidence" value="ECO:0007669"/>
    <property type="project" value="InterPro"/>
</dbReference>
<dbReference type="GO" id="GO:0055129">
    <property type="term" value="P:L-proline biosynthetic process"/>
    <property type="evidence" value="ECO:0007669"/>
    <property type="project" value="UniProtKB-UniRule"/>
</dbReference>
<dbReference type="CDD" id="cd07079">
    <property type="entry name" value="ALDH_F18-19_ProA-GPR"/>
    <property type="match status" value="1"/>
</dbReference>
<dbReference type="FunFam" id="3.40.309.10:FF:000006">
    <property type="entry name" value="Gamma-glutamyl phosphate reductase"/>
    <property type="match status" value="1"/>
</dbReference>
<dbReference type="Gene3D" id="3.40.605.10">
    <property type="entry name" value="Aldehyde Dehydrogenase, Chain A, domain 1"/>
    <property type="match status" value="1"/>
</dbReference>
<dbReference type="Gene3D" id="3.40.309.10">
    <property type="entry name" value="Aldehyde Dehydrogenase, Chain A, domain 2"/>
    <property type="match status" value="1"/>
</dbReference>
<dbReference type="HAMAP" id="MF_00412">
    <property type="entry name" value="ProA"/>
    <property type="match status" value="1"/>
</dbReference>
<dbReference type="InterPro" id="IPR016161">
    <property type="entry name" value="Ald_DH/histidinol_DH"/>
</dbReference>
<dbReference type="InterPro" id="IPR016163">
    <property type="entry name" value="Ald_DH_C"/>
</dbReference>
<dbReference type="InterPro" id="IPR016162">
    <property type="entry name" value="Ald_DH_N"/>
</dbReference>
<dbReference type="InterPro" id="IPR015590">
    <property type="entry name" value="Aldehyde_DH_dom"/>
</dbReference>
<dbReference type="InterPro" id="IPR020593">
    <property type="entry name" value="G-glutamylP_reductase_CS"/>
</dbReference>
<dbReference type="InterPro" id="IPR012134">
    <property type="entry name" value="Glu-5-SA_DH"/>
</dbReference>
<dbReference type="InterPro" id="IPR000965">
    <property type="entry name" value="GPR_dom"/>
</dbReference>
<dbReference type="NCBIfam" id="NF001221">
    <property type="entry name" value="PRK00197.1"/>
    <property type="match status" value="1"/>
</dbReference>
<dbReference type="NCBIfam" id="TIGR00407">
    <property type="entry name" value="proA"/>
    <property type="match status" value="1"/>
</dbReference>
<dbReference type="PANTHER" id="PTHR11063:SF8">
    <property type="entry name" value="DELTA-1-PYRROLINE-5-CARBOXYLATE SYNTHASE"/>
    <property type="match status" value="1"/>
</dbReference>
<dbReference type="PANTHER" id="PTHR11063">
    <property type="entry name" value="GLUTAMATE SEMIALDEHYDE DEHYDROGENASE"/>
    <property type="match status" value="1"/>
</dbReference>
<dbReference type="Pfam" id="PF00171">
    <property type="entry name" value="Aldedh"/>
    <property type="match status" value="1"/>
</dbReference>
<dbReference type="PIRSF" id="PIRSF000151">
    <property type="entry name" value="GPR"/>
    <property type="match status" value="1"/>
</dbReference>
<dbReference type="SUPFAM" id="SSF53720">
    <property type="entry name" value="ALDH-like"/>
    <property type="match status" value="1"/>
</dbReference>
<dbReference type="PROSITE" id="PS01223">
    <property type="entry name" value="PROA"/>
    <property type="match status" value="1"/>
</dbReference>
<accession>Q735X3</accession>
<comment type="function">
    <text evidence="1">Catalyzes the NADPH-dependent reduction of L-glutamate 5-phosphate into L-glutamate 5-semialdehyde and phosphate. The product spontaneously undergoes cyclization to form 1-pyrroline-5-carboxylate.</text>
</comment>
<comment type="catalytic activity">
    <reaction evidence="1">
        <text>L-glutamate 5-semialdehyde + phosphate + NADP(+) = L-glutamyl 5-phosphate + NADPH + H(+)</text>
        <dbReference type="Rhea" id="RHEA:19541"/>
        <dbReference type="ChEBI" id="CHEBI:15378"/>
        <dbReference type="ChEBI" id="CHEBI:43474"/>
        <dbReference type="ChEBI" id="CHEBI:57783"/>
        <dbReference type="ChEBI" id="CHEBI:58066"/>
        <dbReference type="ChEBI" id="CHEBI:58274"/>
        <dbReference type="ChEBI" id="CHEBI:58349"/>
        <dbReference type="EC" id="1.2.1.41"/>
    </reaction>
</comment>
<comment type="pathway">
    <text evidence="1">Amino-acid biosynthesis; L-proline biosynthesis; L-glutamate 5-semialdehyde from L-glutamate: step 2/2.</text>
</comment>
<comment type="subcellular location">
    <subcellularLocation>
        <location evidence="1">Cytoplasm</location>
    </subcellularLocation>
</comment>
<comment type="similarity">
    <text evidence="1">Belongs to the gamma-glutamyl phosphate reductase family.</text>
</comment>
<sequence length="415" mass="45735">MNEVLAKGKRAKEVARELVLKSTHQKNEALAAVANQLIHETAYILEENKRDIEEGKAKGFSDSLLDRLMLTENRIIDMTEGIKQLIELRDPVGECVREWERPNGLSIQEMRVPLGVVGMIYEARPNVTVDAATICLKTGNTVILRGSSSAIHSNKAIVAVIHRALKQTSLPEESVQLIEDTTRDSAKQLFTMNDYLDVLIPRGGKQLIDTVVREASVPVLETGAGNCHIFIDETADKQMAIDIIINAKTQRPSVCNAIETIVLHEKWAQQHGSELFSSLKERGVELRGDQRALALDSSIVLASEEDWGTEFLSLTLAVKVVSSIEEAIHHINTYGSMHSEAIISENEENVSKFFVSVDAAALYHNASTRFTDGSEFGFGAEIGISTQKLHVRGPMGLPALTSTKYVIRGNGQIRK</sequence>
<name>PROA_BACC1</name>